<reference key="1">
    <citation type="submission" date="2008-02" db="EMBL/GenBank/DDBJ databases">
        <title>Complete sequence of chromosome 1 of Burkholderia cenocepacia MC0-3.</title>
        <authorList>
            <person name="Copeland A."/>
            <person name="Lucas S."/>
            <person name="Lapidus A."/>
            <person name="Barry K."/>
            <person name="Bruce D."/>
            <person name="Goodwin L."/>
            <person name="Glavina del Rio T."/>
            <person name="Dalin E."/>
            <person name="Tice H."/>
            <person name="Pitluck S."/>
            <person name="Chain P."/>
            <person name="Malfatti S."/>
            <person name="Shin M."/>
            <person name="Vergez L."/>
            <person name="Schmutz J."/>
            <person name="Larimer F."/>
            <person name="Land M."/>
            <person name="Hauser L."/>
            <person name="Kyrpides N."/>
            <person name="Mikhailova N."/>
            <person name="Tiedje J."/>
            <person name="Richardson P."/>
        </authorList>
    </citation>
    <scope>NUCLEOTIDE SEQUENCE [LARGE SCALE GENOMIC DNA]</scope>
    <source>
        <strain>MC0-3</strain>
    </source>
</reference>
<evidence type="ECO:0000255" key="1">
    <source>
        <dbReference type="HAMAP-Rule" id="MF_01454"/>
    </source>
</evidence>
<evidence type="ECO:0000255" key="2">
    <source>
        <dbReference type="PROSITE-ProRule" id="PRU01231"/>
    </source>
</evidence>
<evidence type="ECO:0000256" key="3">
    <source>
        <dbReference type="SAM" id="MobiDB-lite"/>
    </source>
</evidence>
<sequence>MKFIDEARIEVIAGDGGDGSASMRREKFVPFGGPDGGDGGRGGSVYAIADRNINTLIDYRYAKKHLARNGENGRGSDCYGKGGDDVTLRMPVGTIISDMDTGELIADLTEHDQQVMLAQGGAGGLGNLHFKSSTNRAPRQKTDGKPGERRMLKLELKVLADVGLLGMPNAGKSTFISSVSNAKPKIADYPFTTLAPNLGVVRVGPSKSFVIADIPGLIEGAAEGAGLGHQFLRHLQRTGVLLHLVDLAPFDESVDPVAEATAIVGELRKYDEALYEKPRWLVLNKLDMVPEDEREARVADFLDRFGWDGPVFEISALTGQGCEALCYAIYDYLSEHSDAHRAAEAEDLAADVRFRDAPPAKGGATPGDDA</sequence>
<comment type="function">
    <text evidence="1">An essential GTPase which binds GTP, GDP and possibly (p)ppGpp with moderate affinity, with high nucleotide exchange rates and a fairly low GTP hydrolysis rate. Plays a role in control of the cell cycle, stress response, ribosome biogenesis and in those bacteria that undergo differentiation, in morphogenesis control.</text>
</comment>
<comment type="cofactor">
    <cofactor evidence="1">
        <name>Mg(2+)</name>
        <dbReference type="ChEBI" id="CHEBI:18420"/>
    </cofactor>
</comment>
<comment type="subunit">
    <text evidence="1">Monomer.</text>
</comment>
<comment type="subcellular location">
    <subcellularLocation>
        <location evidence="1">Cytoplasm</location>
    </subcellularLocation>
</comment>
<comment type="similarity">
    <text evidence="1">Belongs to the TRAFAC class OBG-HflX-like GTPase superfamily. OBG GTPase family.</text>
</comment>
<organism>
    <name type="scientific">Burkholderia orbicola (strain MC0-3)</name>
    <dbReference type="NCBI Taxonomy" id="406425"/>
    <lineage>
        <taxon>Bacteria</taxon>
        <taxon>Pseudomonadati</taxon>
        <taxon>Pseudomonadota</taxon>
        <taxon>Betaproteobacteria</taxon>
        <taxon>Burkholderiales</taxon>
        <taxon>Burkholderiaceae</taxon>
        <taxon>Burkholderia</taxon>
        <taxon>Burkholderia cepacia complex</taxon>
        <taxon>Burkholderia orbicola</taxon>
    </lineage>
</organism>
<protein>
    <recommendedName>
        <fullName evidence="1">GTPase Obg</fullName>
        <ecNumber evidence="1">3.6.5.-</ecNumber>
    </recommendedName>
    <alternativeName>
        <fullName evidence="1">GTP-binding protein Obg</fullName>
    </alternativeName>
</protein>
<gene>
    <name evidence="1" type="primary">obg</name>
    <name type="ordered locus">Bcenmc03_0553</name>
</gene>
<dbReference type="EC" id="3.6.5.-" evidence="1"/>
<dbReference type="EMBL" id="CP000958">
    <property type="protein sequence ID" value="ACA89731.1"/>
    <property type="molecule type" value="Genomic_DNA"/>
</dbReference>
<dbReference type="SMR" id="B1JVA1"/>
<dbReference type="GeneID" id="83047355"/>
<dbReference type="KEGG" id="bcm:Bcenmc03_0553"/>
<dbReference type="HOGENOM" id="CLU_011747_2_0_4"/>
<dbReference type="Proteomes" id="UP000002169">
    <property type="component" value="Chromosome 1"/>
</dbReference>
<dbReference type="GO" id="GO:0005737">
    <property type="term" value="C:cytoplasm"/>
    <property type="evidence" value="ECO:0007669"/>
    <property type="project" value="UniProtKB-SubCell"/>
</dbReference>
<dbReference type="GO" id="GO:0005525">
    <property type="term" value="F:GTP binding"/>
    <property type="evidence" value="ECO:0007669"/>
    <property type="project" value="UniProtKB-UniRule"/>
</dbReference>
<dbReference type="GO" id="GO:0003924">
    <property type="term" value="F:GTPase activity"/>
    <property type="evidence" value="ECO:0007669"/>
    <property type="project" value="UniProtKB-UniRule"/>
</dbReference>
<dbReference type="GO" id="GO:0000287">
    <property type="term" value="F:magnesium ion binding"/>
    <property type="evidence" value="ECO:0007669"/>
    <property type="project" value="InterPro"/>
</dbReference>
<dbReference type="GO" id="GO:0042254">
    <property type="term" value="P:ribosome biogenesis"/>
    <property type="evidence" value="ECO:0007669"/>
    <property type="project" value="UniProtKB-UniRule"/>
</dbReference>
<dbReference type="CDD" id="cd01898">
    <property type="entry name" value="Obg"/>
    <property type="match status" value="1"/>
</dbReference>
<dbReference type="FunFam" id="2.70.210.12:FF:000001">
    <property type="entry name" value="GTPase Obg"/>
    <property type="match status" value="1"/>
</dbReference>
<dbReference type="Gene3D" id="2.70.210.12">
    <property type="entry name" value="GTP1/OBG domain"/>
    <property type="match status" value="1"/>
</dbReference>
<dbReference type="Gene3D" id="3.40.50.300">
    <property type="entry name" value="P-loop containing nucleotide triphosphate hydrolases"/>
    <property type="match status" value="1"/>
</dbReference>
<dbReference type="HAMAP" id="MF_01454">
    <property type="entry name" value="GTPase_Obg"/>
    <property type="match status" value="1"/>
</dbReference>
<dbReference type="InterPro" id="IPR031167">
    <property type="entry name" value="G_OBG"/>
</dbReference>
<dbReference type="InterPro" id="IPR006073">
    <property type="entry name" value="GTP-bd"/>
</dbReference>
<dbReference type="InterPro" id="IPR014100">
    <property type="entry name" value="GTP-bd_Obg/CgtA"/>
</dbReference>
<dbReference type="InterPro" id="IPR006074">
    <property type="entry name" value="GTP1-OBG_CS"/>
</dbReference>
<dbReference type="InterPro" id="IPR006169">
    <property type="entry name" value="GTP1_OBG_dom"/>
</dbReference>
<dbReference type="InterPro" id="IPR036726">
    <property type="entry name" value="GTP1_OBG_dom_sf"/>
</dbReference>
<dbReference type="InterPro" id="IPR045086">
    <property type="entry name" value="OBG_GTPase"/>
</dbReference>
<dbReference type="InterPro" id="IPR027417">
    <property type="entry name" value="P-loop_NTPase"/>
</dbReference>
<dbReference type="NCBIfam" id="TIGR02729">
    <property type="entry name" value="Obg_CgtA"/>
    <property type="match status" value="1"/>
</dbReference>
<dbReference type="NCBIfam" id="NF008954">
    <property type="entry name" value="PRK12296.1"/>
    <property type="match status" value="1"/>
</dbReference>
<dbReference type="NCBIfam" id="NF008955">
    <property type="entry name" value="PRK12297.1"/>
    <property type="match status" value="1"/>
</dbReference>
<dbReference type="NCBIfam" id="NF008956">
    <property type="entry name" value="PRK12299.1"/>
    <property type="match status" value="1"/>
</dbReference>
<dbReference type="PANTHER" id="PTHR11702">
    <property type="entry name" value="DEVELOPMENTALLY REGULATED GTP-BINDING PROTEIN-RELATED"/>
    <property type="match status" value="1"/>
</dbReference>
<dbReference type="PANTHER" id="PTHR11702:SF31">
    <property type="entry name" value="MITOCHONDRIAL RIBOSOME-ASSOCIATED GTPASE 2"/>
    <property type="match status" value="1"/>
</dbReference>
<dbReference type="Pfam" id="PF01018">
    <property type="entry name" value="GTP1_OBG"/>
    <property type="match status" value="1"/>
</dbReference>
<dbReference type="Pfam" id="PF01926">
    <property type="entry name" value="MMR_HSR1"/>
    <property type="match status" value="1"/>
</dbReference>
<dbReference type="PIRSF" id="PIRSF002401">
    <property type="entry name" value="GTP_bd_Obg/CgtA"/>
    <property type="match status" value="1"/>
</dbReference>
<dbReference type="PRINTS" id="PR00326">
    <property type="entry name" value="GTP1OBG"/>
</dbReference>
<dbReference type="SUPFAM" id="SSF82051">
    <property type="entry name" value="Obg GTP-binding protein N-terminal domain"/>
    <property type="match status" value="1"/>
</dbReference>
<dbReference type="SUPFAM" id="SSF52540">
    <property type="entry name" value="P-loop containing nucleoside triphosphate hydrolases"/>
    <property type="match status" value="1"/>
</dbReference>
<dbReference type="PROSITE" id="PS51710">
    <property type="entry name" value="G_OBG"/>
    <property type="match status" value="1"/>
</dbReference>
<dbReference type="PROSITE" id="PS00905">
    <property type="entry name" value="GTP1_OBG"/>
    <property type="match status" value="1"/>
</dbReference>
<dbReference type="PROSITE" id="PS51883">
    <property type="entry name" value="OBG"/>
    <property type="match status" value="1"/>
</dbReference>
<accession>B1JVA1</accession>
<keyword id="KW-0963">Cytoplasm</keyword>
<keyword id="KW-0342">GTP-binding</keyword>
<keyword id="KW-0378">Hydrolase</keyword>
<keyword id="KW-0460">Magnesium</keyword>
<keyword id="KW-0479">Metal-binding</keyword>
<keyword id="KW-0547">Nucleotide-binding</keyword>
<feature type="chain" id="PRO_0000385780" description="GTPase Obg">
    <location>
        <begin position="1"/>
        <end position="370"/>
    </location>
</feature>
<feature type="domain" description="Obg" evidence="2">
    <location>
        <begin position="1"/>
        <end position="159"/>
    </location>
</feature>
<feature type="domain" description="OBG-type G" evidence="1">
    <location>
        <begin position="160"/>
        <end position="334"/>
    </location>
</feature>
<feature type="region of interest" description="Disordered" evidence="3">
    <location>
        <begin position="128"/>
        <end position="147"/>
    </location>
</feature>
<feature type="binding site" evidence="1">
    <location>
        <begin position="166"/>
        <end position="173"/>
    </location>
    <ligand>
        <name>GTP</name>
        <dbReference type="ChEBI" id="CHEBI:37565"/>
    </ligand>
</feature>
<feature type="binding site" evidence="1">
    <location>
        <position position="173"/>
    </location>
    <ligand>
        <name>Mg(2+)</name>
        <dbReference type="ChEBI" id="CHEBI:18420"/>
    </ligand>
</feature>
<feature type="binding site" evidence="1">
    <location>
        <begin position="191"/>
        <end position="195"/>
    </location>
    <ligand>
        <name>GTP</name>
        <dbReference type="ChEBI" id="CHEBI:37565"/>
    </ligand>
</feature>
<feature type="binding site" evidence="1">
    <location>
        <position position="193"/>
    </location>
    <ligand>
        <name>Mg(2+)</name>
        <dbReference type="ChEBI" id="CHEBI:18420"/>
    </ligand>
</feature>
<feature type="binding site" evidence="1">
    <location>
        <begin position="213"/>
        <end position="216"/>
    </location>
    <ligand>
        <name>GTP</name>
        <dbReference type="ChEBI" id="CHEBI:37565"/>
    </ligand>
</feature>
<feature type="binding site" evidence="1">
    <location>
        <begin position="284"/>
        <end position="287"/>
    </location>
    <ligand>
        <name>GTP</name>
        <dbReference type="ChEBI" id="CHEBI:37565"/>
    </ligand>
</feature>
<feature type="binding site" evidence="1">
    <location>
        <begin position="315"/>
        <end position="317"/>
    </location>
    <ligand>
        <name>GTP</name>
        <dbReference type="ChEBI" id="CHEBI:37565"/>
    </ligand>
</feature>
<proteinExistence type="inferred from homology"/>
<name>OBG_BURO0</name>